<protein>
    <recommendedName>
        <fullName evidence="1">Cytochrome b6-f complex subunit 4</fullName>
    </recommendedName>
    <alternativeName>
        <fullName evidence="1">17 kDa polypeptide</fullName>
    </alternativeName>
</protein>
<organism>
    <name type="scientific">Prochlorococcus marinus (strain MIT 9301)</name>
    <dbReference type="NCBI Taxonomy" id="167546"/>
    <lineage>
        <taxon>Bacteria</taxon>
        <taxon>Bacillati</taxon>
        <taxon>Cyanobacteriota</taxon>
        <taxon>Cyanophyceae</taxon>
        <taxon>Synechococcales</taxon>
        <taxon>Prochlorococcaceae</taxon>
        <taxon>Prochlorococcus</taxon>
    </lineage>
</organism>
<comment type="function">
    <text evidence="1">Component of the cytochrome b6-f complex, which mediates electron transfer between photosystem II (PSII) and photosystem I (PSI), cyclic electron flow around PSI, and state transitions.</text>
</comment>
<comment type="subunit">
    <text evidence="1">The 4 large subunits of the cytochrome b6-f complex are cytochrome b6, subunit IV (17 kDa polypeptide, PetD), cytochrome f and the Rieske protein, while the 4 small subunits are PetG, PetL, PetM and PetN. The complex functions as a dimer.</text>
</comment>
<comment type="subcellular location">
    <subcellularLocation>
        <location evidence="1">Cellular thylakoid membrane</location>
        <topology evidence="1">Multi-pass membrane protein</topology>
    </subcellularLocation>
</comment>
<comment type="similarity">
    <text evidence="1">Belongs to the cytochrome b family. PetD subfamily.</text>
</comment>
<keyword id="KW-0249">Electron transport</keyword>
<keyword id="KW-0472">Membrane</keyword>
<keyword id="KW-0602">Photosynthesis</keyword>
<keyword id="KW-1185">Reference proteome</keyword>
<keyword id="KW-0793">Thylakoid</keyword>
<keyword id="KW-0812">Transmembrane</keyword>
<keyword id="KW-1133">Transmembrane helix</keyword>
<keyword id="KW-0813">Transport</keyword>
<reference key="1">
    <citation type="journal article" date="2007" name="PLoS Genet.">
        <title>Patterns and implications of gene gain and loss in the evolution of Prochlorococcus.</title>
        <authorList>
            <person name="Kettler G.C."/>
            <person name="Martiny A.C."/>
            <person name="Huang K."/>
            <person name="Zucker J."/>
            <person name="Coleman M.L."/>
            <person name="Rodrigue S."/>
            <person name="Chen F."/>
            <person name="Lapidus A."/>
            <person name="Ferriera S."/>
            <person name="Johnson J."/>
            <person name="Steglich C."/>
            <person name="Church G.M."/>
            <person name="Richardson P."/>
            <person name="Chisholm S.W."/>
        </authorList>
    </citation>
    <scope>NUCLEOTIDE SEQUENCE [LARGE SCALE GENOMIC DNA]</scope>
    <source>
        <strain>MIT 9301</strain>
    </source>
</reference>
<proteinExistence type="inferred from homology"/>
<sequence length="160" mass="17675">MSTLKKPDLSDPKLRAKLAKGMGHNYYGEPAWPNDLLYIFPVVILGTIACVVGLAVLDPAMLGDKANPFATPLEILPEWYLYPVFQILRVVPNKLLGIALQTLIPLGLMILPFIENVNKFSNPFRRPIAMSVFLFGTFLTIYLGIGACLPIDKSLTLGLF</sequence>
<evidence type="ECO:0000255" key="1">
    <source>
        <dbReference type="HAMAP-Rule" id="MF_01344"/>
    </source>
</evidence>
<feature type="chain" id="PRO_1000054897" description="Cytochrome b6-f complex subunit 4">
    <location>
        <begin position="1"/>
        <end position="160"/>
    </location>
</feature>
<feature type="transmembrane region" description="Helical" evidence="1">
    <location>
        <begin position="36"/>
        <end position="56"/>
    </location>
</feature>
<feature type="transmembrane region" description="Helical" evidence="1">
    <location>
        <begin position="95"/>
        <end position="115"/>
    </location>
</feature>
<feature type="transmembrane region" description="Helical" evidence="1">
    <location>
        <begin position="128"/>
        <end position="148"/>
    </location>
</feature>
<name>PETD_PROM0</name>
<accession>A3PB50</accession>
<gene>
    <name evidence="1" type="primary">petD</name>
    <name type="ordered locus">P9301_03521</name>
</gene>
<dbReference type="EMBL" id="CP000576">
    <property type="protein sequence ID" value="ABO16975.1"/>
    <property type="molecule type" value="Genomic_DNA"/>
</dbReference>
<dbReference type="RefSeq" id="WP_002808353.1">
    <property type="nucleotide sequence ID" value="NC_009091.1"/>
</dbReference>
<dbReference type="SMR" id="A3PB50"/>
<dbReference type="STRING" id="167546.P9301_03521"/>
<dbReference type="KEGG" id="pmg:P9301_03521"/>
<dbReference type="eggNOG" id="COG1290">
    <property type="taxonomic scope" value="Bacteria"/>
</dbReference>
<dbReference type="HOGENOM" id="CLU_112652_0_0_3"/>
<dbReference type="OrthoDB" id="529454at2"/>
<dbReference type="Proteomes" id="UP000001430">
    <property type="component" value="Chromosome"/>
</dbReference>
<dbReference type="GO" id="GO:0031676">
    <property type="term" value="C:plasma membrane-derived thylakoid membrane"/>
    <property type="evidence" value="ECO:0007669"/>
    <property type="project" value="UniProtKB-SubCell"/>
</dbReference>
<dbReference type="GO" id="GO:0045158">
    <property type="term" value="F:electron transporter, transferring electrons within cytochrome b6/f complex of photosystem II activity"/>
    <property type="evidence" value="ECO:0007669"/>
    <property type="project" value="UniProtKB-UniRule"/>
</dbReference>
<dbReference type="GO" id="GO:0045156">
    <property type="term" value="F:electron transporter, transferring electrons within the cyclic electron transport pathway of photosynthesis activity"/>
    <property type="evidence" value="ECO:0007669"/>
    <property type="project" value="InterPro"/>
</dbReference>
<dbReference type="GO" id="GO:0008121">
    <property type="term" value="F:ubiquinol-cytochrome-c reductase activity"/>
    <property type="evidence" value="ECO:0007669"/>
    <property type="project" value="TreeGrafter"/>
</dbReference>
<dbReference type="GO" id="GO:0009767">
    <property type="term" value="P:photosynthetic electron transport chain"/>
    <property type="evidence" value="ECO:0007669"/>
    <property type="project" value="InterPro"/>
</dbReference>
<dbReference type="CDD" id="cd00290">
    <property type="entry name" value="cytochrome_b_C"/>
    <property type="match status" value="1"/>
</dbReference>
<dbReference type="FunFam" id="1.10.287.980:FF:000001">
    <property type="entry name" value="Cytochrome b6-f complex subunit 4"/>
    <property type="match status" value="1"/>
</dbReference>
<dbReference type="FunFam" id="1.20.5.510:FF:000002">
    <property type="entry name" value="Cytochrome b6-f complex subunit 4"/>
    <property type="match status" value="1"/>
</dbReference>
<dbReference type="Gene3D" id="1.10.287.980">
    <property type="entry name" value="plastocyanin oxidoreductase"/>
    <property type="match status" value="1"/>
</dbReference>
<dbReference type="Gene3D" id="1.20.5.510">
    <property type="entry name" value="Single helix bin"/>
    <property type="match status" value="1"/>
</dbReference>
<dbReference type="HAMAP" id="MF_01344">
    <property type="entry name" value="Cytb6_f_subIV"/>
    <property type="match status" value="1"/>
</dbReference>
<dbReference type="InterPro" id="IPR005798">
    <property type="entry name" value="Cyt_b/b6_C"/>
</dbReference>
<dbReference type="InterPro" id="IPR036150">
    <property type="entry name" value="Cyt_b/b6_C_sf"/>
</dbReference>
<dbReference type="InterPro" id="IPR005870">
    <property type="entry name" value="Cyt_b6/f_cplx_suIV"/>
</dbReference>
<dbReference type="InterPro" id="IPR048260">
    <property type="entry name" value="Cytochrome_b_C_euk/bac"/>
</dbReference>
<dbReference type="NCBIfam" id="TIGR01156">
    <property type="entry name" value="cytb6_f_IV"/>
    <property type="match status" value="1"/>
</dbReference>
<dbReference type="PANTHER" id="PTHR19271">
    <property type="entry name" value="CYTOCHROME B"/>
    <property type="match status" value="1"/>
</dbReference>
<dbReference type="PANTHER" id="PTHR19271:SF41">
    <property type="entry name" value="CYTOCHROME B_B6 C-TERMINAL REGION PROFILE DOMAIN-CONTAINING PROTEIN"/>
    <property type="match status" value="1"/>
</dbReference>
<dbReference type="Pfam" id="PF00032">
    <property type="entry name" value="Cytochrom_B_C"/>
    <property type="match status" value="1"/>
</dbReference>
<dbReference type="PIRSF" id="PIRSF000033">
    <property type="entry name" value="B6f_17K"/>
    <property type="match status" value="1"/>
</dbReference>
<dbReference type="SUPFAM" id="SSF81648">
    <property type="entry name" value="a domain/subunit of cytochrome bc1 complex (Ubiquinol-cytochrome c reductase)"/>
    <property type="match status" value="1"/>
</dbReference>
<dbReference type="PROSITE" id="PS51003">
    <property type="entry name" value="CYTB_CTER"/>
    <property type="match status" value="1"/>
</dbReference>